<evidence type="ECO:0000255" key="1">
    <source>
        <dbReference type="HAMAP-Rule" id="MF_01021"/>
    </source>
</evidence>
<proteinExistence type="inferred from homology"/>
<organism>
    <name type="scientific">Burkholderia vietnamiensis (strain G4 / LMG 22486)</name>
    <name type="common">Burkholderia cepacia (strain R1808)</name>
    <dbReference type="NCBI Taxonomy" id="269482"/>
    <lineage>
        <taxon>Bacteria</taxon>
        <taxon>Pseudomonadati</taxon>
        <taxon>Pseudomonadota</taxon>
        <taxon>Betaproteobacteria</taxon>
        <taxon>Burkholderiales</taxon>
        <taxon>Burkholderiaceae</taxon>
        <taxon>Burkholderia</taxon>
        <taxon>Burkholderia cepacia complex</taxon>
    </lineage>
</organism>
<dbReference type="EC" id="3.5.4.19" evidence="1"/>
<dbReference type="EMBL" id="CP000614">
    <property type="protein sequence ID" value="ABO53423.1"/>
    <property type="molecule type" value="Genomic_DNA"/>
</dbReference>
<dbReference type="SMR" id="A4JAX0"/>
<dbReference type="KEGG" id="bvi:Bcep1808_0411"/>
<dbReference type="eggNOG" id="COG0139">
    <property type="taxonomic scope" value="Bacteria"/>
</dbReference>
<dbReference type="HOGENOM" id="CLU_048577_5_0_4"/>
<dbReference type="UniPathway" id="UPA00031">
    <property type="reaction ID" value="UER00008"/>
</dbReference>
<dbReference type="Proteomes" id="UP000002287">
    <property type="component" value="Chromosome 1"/>
</dbReference>
<dbReference type="GO" id="GO:0005737">
    <property type="term" value="C:cytoplasm"/>
    <property type="evidence" value="ECO:0007669"/>
    <property type="project" value="UniProtKB-SubCell"/>
</dbReference>
<dbReference type="GO" id="GO:0000287">
    <property type="term" value="F:magnesium ion binding"/>
    <property type="evidence" value="ECO:0007669"/>
    <property type="project" value="UniProtKB-UniRule"/>
</dbReference>
<dbReference type="GO" id="GO:0004635">
    <property type="term" value="F:phosphoribosyl-AMP cyclohydrolase activity"/>
    <property type="evidence" value="ECO:0007669"/>
    <property type="project" value="UniProtKB-UniRule"/>
</dbReference>
<dbReference type="GO" id="GO:0008270">
    <property type="term" value="F:zinc ion binding"/>
    <property type="evidence" value="ECO:0007669"/>
    <property type="project" value="UniProtKB-UniRule"/>
</dbReference>
<dbReference type="GO" id="GO:0000105">
    <property type="term" value="P:L-histidine biosynthetic process"/>
    <property type="evidence" value="ECO:0007669"/>
    <property type="project" value="UniProtKB-UniRule"/>
</dbReference>
<dbReference type="FunFam" id="3.10.20.810:FF:000001">
    <property type="entry name" value="Histidine biosynthesis bifunctional protein HisIE"/>
    <property type="match status" value="1"/>
</dbReference>
<dbReference type="Gene3D" id="3.10.20.810">
    <property type="entry name" value="Phosphoribosyl-AMP cyclohydrolase"/>
    <property type="match status" value="1"/>
</dbReference>
<dbReference type="HAMAP" id="MF_01021">
    <property type="entry name" value="HisI"/>
    <property type="match status" value="1"/>
</dbReference>
<dbReference type="InterPro" id="IPR026660">
    <property type="entry name" value="PRA-CH"/>
</dbReference>
<dbReference type="InterPro" id="IPR002496">
    <property type="entry name" value="PRib_AMP_CycHydrolase_dom"/>
</dbReference>
<dbReference type="InterPro" id="IPR038019">
    <property type="entry name" value="PRib_AMP_CycHydrolase_sf"/>
</dbReference>
<dbReference type="NCBIfam" id="NF000768">
    <property type="entry name" value="PRK00051.1"/>
    <property type="match status" value="1"/>
</dbReference>
<dbReference type="PANTHER" id="PTHR42945">
    <property type="entry name" value="HISTIDINE BIOSYNTHESIS BIFUNCTIONAL PROTEIN"/>
    <property type="match status" value="1"/>
</dbReference>
<dbReference type="PANTHER" id="PTHR42945:SF1">
    <property type="entry name" value="HISTIDINE BIOSYNTHESIS BIFUNCTIONAL PROTEIN HIS7"/>
    <property type="match status" value="1"/>
</dbReference>
<dbReference type="Pfam" id="PF01502">
    <property type="entry name" value="PRA-CH"/>
    <property type="match status" value="1"/>
</dbReference>
<dbReference type="SUPFAM" id="SSF141734">
    <property type="entry name" value="HisI-like"/>
    <property type="match status" value="1"/>
</dbReference>
<feature type="chain" id="PRO_1000063399" description="Phosphoribosyl-AMP cyclohydrolase">
    <location>
        <begin position="1"/>
        <end position="138"/>
    </location>
</feature>
<feature type="binding site" evidence="1">
    <location>
        <position position="84"/>
    </location>
    <ligand>
        <name>Mg(2+)</name>
        <dbReference type="ChEBI" id="CHEBI:18420"/>
    </ligand>
</feature>
<feature type="binding site" evidence="1">
    <location>
        <position position="85"/>
    </location>
    <ligand>
        <name>Zn(2+)</name>
        <dbReference type="ChEBI" id="CHEBI:29105"/>
        <note>ligand shared between dimeric partners</note>
    </ligand>
</feature>
<feature type="binding site" evidence="1">
    <location>
        <position position="86"/>
    </location>
    <ligand>
        <name>Mg(2+)</name>
        <dbReference type="ChEBI" id="CHEBI:18420"/>
    </ligand>
</feature>
<feature type="binding site" evidence="1">
    <location>
        <position position="88"/>
    </location>
    <ligand>
        <name>Mg(2+)</name>
        <dbReference type="ChEBI" id="CHEBI:18420"/>
    </ligand>
</feature>
<feature type="binding site" evidence="1">
    <location>
        <position position="102"/>
    </location>
    <ligand>
        <name>Zn(2+)</name>
        <dbReference type="ChEBI" id="CHEBI:29105"/>
        <note>ligand shared between dimeric partners</note>
    </ligand>
</feature>
<feature type="binding site" evidence="1">
    <location>
        <position position="109"/>
    </location>
    <ligand>
        <name>Zn(2+)</name>
        <dbReference type="ChEBI" id="CHEBI:29105"/>
        <note>ligand shared between dimeric partners</note>
    </ligand>
</feature>
<accession>A4JAX0</accession>
<reference key="1">
    <citation type="submission" date="2007-03" db="EMBL/GenBank/DDBJ databases">
        <title>Complete sequence of chromosome 1 of Burkholderia vietnamiensis G4.</title>
        <authorList>
            <consortium name="US DOE Joint Genome Institute"/>
            <person name="Copeland A."/>
            <person name="Lucas S."/>
            <person name="Lapidus A."/>
            <person name="Barry K."/>
            <person name="Detter J.C."/>
            <person name="Glavina del Rio T."/>
            <person name="Hammon N."/>
            <person name="Israni S."/>
            <person name="Dalin E."/>
            <person name="Tice H."/>
            <person name="Pitluck S."/>
            <person name="Chain P."/>
            <person name="Malfatti S."/>
            <person name="Shin M."/>
            <person name="Vergez L."/>
            <person name="Schmutz J."/>
            <person name="Larimer F."/>
            <person name="Land M."/>
            <person name="Hauser L."/>
            <person name="Kyrpides N."/>
            <person name="Tiedje J."/>
            <person name="Richardson P."/>
        </authorList>
    </citation>
    <scope>NUCLEOTIDE SEQUENCE [LARGE SCALE GENOMIC DNA]</scope>
    <source>
        <strain>G4 / LMG 22486</strain>
    </source>
</reference>
<sequence>MTTDTQSLPAWLDKVRWDDNGLVPVIAQEAATNDVLMFAWMNREALAKTIETQRAVYYSRSRKRLWFKGEESGHVQHVHEVRLDCDEDVVLLKVEQVSGIACHTGRHSCFFQKFEGTVENGDWVAVEPVLKDPEHIYK</sequence>
<comment type="function">
    <text evidence="1">Catalyzes the hydrolysis of the adenine ring of phosphoribosyl-AMP.</text>
</comment>
<comment type="catalytic activity">
    <reaction evidence="1">
        <text>1-(5-phospho-beta-D-ribosyl)-5'-AMP + H2O = 1-(5-phospho-beta-D-ribosyl)-5-[(5-phospho-beta-D-ribosylamino)methylideneamino]imidazole-4-carboxamide</text>
        <dbReference type="Rhea" id="RHEA:20049"/>
        <dbReference type="ChEBI" id="CHEBI:15377"/>
        <dbReference type="ChEBI" id="CHEBI:58435"/>
        <dbReference type="ChEBI" id="CHEBI:59457"/>
        <dbReference type="EC" id="3.5.4.19"/>
    </reaction>
</comment>
<comment type="cofactor">
    <cofactor evidence="1">
        <name>Mg(2+)</name>
        <dbReference type="ChEBI" id="CHEBI:18420"/>
    </cofactor>
    <text evidence="1">Binds 1 Mg(2+) ion per subunit.</text>
</comment>
<comment type="cofactor">
    <cofactor evidence="1">
        <name>Zn(2+)</name>
        <dbReference type="ChEBI" id="CHEBI:29105"/>
    </cofactor>
    <text evidence="1">Binds 1 zinc ion per subunit.</text>
</comment>
<comment type="pathway">
    <text evidence="1">Amino-acid biosynthesis; L-histidine biosynthesis; L-histidine from 5-phospho-alpha-D-ribose 1-diphosphate: step 3/9.</text>
</comment>
<comment type="subunit">
    <text evidence="1">Homodimer.</text>
</comment>
<comment type="subcellular location">
    <subcellularLocation>
        <location evidence="1">Cytoplasm</location>
    </subcellularLocation>
</comment>
<comment type="similarity">
    <text evidence="1">Belongs to the PRA-CH family.</text>
</comment>
<name>HIS3_BURVG</name>
<keyword id="KW-0028">Amino-acid biosynthesis</keyword>
<keyword id="KW-0963">Cytoplasm</keyword>
<keyword id="KW-0368">Histidine biosynthesis</keyword>
<keyword id="KW-0378">Hydrolase</keyword>
<keyword id="KW-0460">Magnesium</keyword>
<keyword id="KW-0479">Metal-binding</keyword>
<keyword id="KW-0862">Zinc</keyword>
<protein>
    <recommendedName>
        <fullName evidence="1">Phosphoribosyl-AMP cyclohydrolase</fullName>
        <shortName evidence="1">PRA-CH</shortName>
        <ecNumber evidence="1">3.5.4.19</ecNumber>
    </recommendedName>
</protein>
<gene>
    <name evidence="1" type="primary">hisI</name>
    <name type="ordered locus">Bcep1808_0411</name>
</gene>